<evidence type="ECO:0000250" key="1">
    <source>
        <dbReference type="UniProtKB" id="C0LGT6"/>
    </source>
</evidence>
<evidence type="ECO:0000250" key="2">
    <source>
        <dbReference type="UniProtKB" id="O22476"/>
    </source>
</evidence>
<evidence type="ECO:0000255" key="3"/>
<evidence type="ECO:0000255" key="4">
    <source>
        <dbReference type="PROSITE-ProRule" id="PRU00159"/>
    </source>
</evidence>
<evidence type="ECO:0000255" key="5">
    <source>
        <dbReference type="PROSITE-ProRule" id="PRU10027"/>
    </source>
</evidence>
<evidence type="ECO:0000269" key="6">
    <source>
    </source>
</evidence>
<evidence type="ECO:0000305" key="7"/>
<dbReference type="EC" id="2.7.11.1"/>
<dbReference type="EMBL" id="AB007644">
    <property type="protein sequence ID" value="BAB10719.1"/>
    <property type="molecule type" value="Genomic_DNA"/>
</dbReference>
<dbReference type="EMBL" id="CP002688">
    <property type="protein sequence ID" value="AED96423.1"/>
    <property type="molecule type" value="Genomic_DNA"/>
</dbReference>
<dbReference type="EMBL" id="AY064019">
    <property type="protein sequence ID" value="AAL36375.1"/>
    <property type="molecule type" value="mRNA"/>
</dbReference>
<dbReference type="EMBL" id="AY091180">
    <property type="protein sequence ID" value="AAM14119.1"/>
    <property type="molecule type" value="mRNA"/>
</dbReference>
<dbReference type="RefSeq" id="NP_200200.1">
    <property type="nucleotide sequence ID" value="NM_124768.4"/>
</dbReference>
<dbReference type="SMR" id="Q9FN37"/>
<dbReference type="BioGRID" id="20714">
    <property type="interactions" value="31"/>
</dbReference>
<dbReference type="FunCoup" id="Q9FN37">
    <property type="interactions" value="1204"/>
</dbReference>
<dbReference type="IntAct" id="Q9FN37">
    <property type="interactions" value="42"/>
</dbReference>
<dbReference type="STRING" id="3702.Q9FN37"/>
<dbReference type="GlyCosmos" id="Q9FN37">
    <property type="glycosylation" value="18 sites, No reported glycans"/>
</dbReference>
<dbReference type="GlyGen" id="Q9FN37">
    <property type="glycosylation" value="18 sites"/>
</dbReference>
<dbReference type="iPTMnet" id="Q9FN37"/>
<dbReference type="PaxDb" id="3702-AT5G53890.1"/>
<dbReference type="ProteomicsDB" id="248895"/>
<dbReference type="EnsemblPlants" id="AT5G53890.1">
    <property type="protein sequence ID" value="AT5G53890.1"/>
    <property type="gene ID" value="AT5G53890"/>
</dbReference>
<dbReference type="GeneID" id="835470"/>
<dbReference type="Gramene" id="AT5G53890.1">
    <property type="protein sequence ID" value="AT5G53890.1"/>
    <property type="gene ID" value="AT5G53890"/>
</dbReference>
<dbReference type="KEGG" id="ath:AT5G53890"/>
<dbReference type="Araport" id="AT5G53890"/>
<dbReference type="TAIR" id="AT5G53890">
    <property type="gene designation" value="PSKR2"/>
</dbReference>
<dbReference type="eggNOG" id="ENOG502QT4D">
    <property type="taxonomic scope" value="Eukaryota"/>
</dbReference>
<dbReference type="HOGENOM" id="CLU_000288_22_9_1"/>
<dbReference type="InParanoid" id="Q9FN37"/>
<dbReference type="OMA" id="CKCLDQD"/>
<dbReference type="OrthoDB" id="676979at2759"/>
<dbReference type="PhylomeDB" id="Q9FN37"/>
<dbReference type="PRO" id="PR:Q9FN37"/>
<dbReference type="Proteomes" id="UP000006548">
    <property type="component" value="Chromosome 5"/>
</dbReference>
<dbReference type="ExpressionAtlas" id="Q9FN37">
    <property type="expression patterns" value="baseline and differential"/>
</dbReference>
<dbReference type="GO" id="GO:0009507">
    <property type="term" value="C:chloroplast"/>
    <property type="evidence" value="ECO:0007005"/>
    <property type="project" value="TAIR"/>
</dbReference>
<dbReference type="GO" id="GO:0005886">
    <property type="term" value="C:plasma membrane"/>
    <property type="evidence" value="ECO:0007669"/>
    <property type="project" value="UniProtKB-SubCell"/>
</dbReference>
<dbReference type="GO" id="GO:0005524">
    <property type="term" value="F:ATP binding"/>
    <property type="evidence" value="ECO:0007669"/>
    <property type="project" value="UniProtKB-KW"/>
</dbReference>
<dbReference type="GO" id="GO:0001653">
    <property type="term" value="F:peptide receptor activity"/>
    <property type="evidence" value="ECO:0000315"/>
    <property type="project" value="TAIR"/>
</dbReference>
<dbReference type="GO" id="GO:0106310">
    <property type="term" value="F:protein serine kinase activity"/>
    <property type="evidence" value="ECO:0007669"/>
    <property type="project" value="RHEA"/>
</dbReference>
<dbReference type="GO" id="GO:0004674">
    <property type="term" value="F:protein serine/threonine kinase activity"/>
    <property type="evidence" value="ECO:0007669"/>
    <property type="project" value="UniProtKB-KW"/>
</dbReference>
<dbReference type="CDD" id="cd14066">
    <property type="entry name" value="STKc_IRAK"/>
    <property type="match status" value="1"/>
</dbReference>
<dbReference type="FunFam" id="1.10.510.10:FF:000309">
    <property type="entry name" value="Leucine-rich repeat receptor-like protein kinase"/>
    <property type="match status" value="1"/>
</dbReference>
<dbReference type="FunFam" id="3.80.10.10:FF:001313">
    <property type="entry name" value="Leucine-rich repeat receptor-like protein kinase"/>
    <property type="match status" value="1"/>
</dbReference>
<dbReference type="FunFam" id="3.80.10.10:FF:001588">
    <property type="entry name" value="Leucine-rich repeat receptor-like protein kinase"/>
    <property type="match status" value="1"/>
</dbReference>
<dbReference type="FunFam" id="3.80.10.10:FF:000618">
    <property type="entry name" value="Leucine-rich repeat receptor-like serine/threonine-protein kinase BAM3"/>
    <property type="match status" value="1"/>
</dbReference>
<dbReference type="FunFam" id="3.80.10.10:FF:000111">
    <property type="entry name" value="LRR receptor-like serine/threonine-protein kinase ERECTA"/>
    <property type="match status" value="1"/>
</dbReference>
<dbReference type="FunFam" id="3.30.200.20:FF:000566">
    <property type="entry name" value="Phytosulfokine receptor 1"/>
    <property type="match status" value="1"/>
</dbReference>
<dbReference type="Gene3D" id="3.30.200.20">
    <property type="entry name" value="Phosphorylase Kinase, domain 1"/>
    <property type="match status" value="1"/>
</dbReference>
<dbReference type="Gene3D" id="3.80.10.10">
    <property type="entry name" value="Ribonuclease Inhibitor"/>
    <property type="match status" value="4"/>
</dbReference>
<dbReference type="Gene3D" id="1.10.510.10">
    <property type="entry name" value="Transferase(Phosphotransferase) domain 1"/>
    <property type="match status" value="1"/>
</dbReference>
<dbReference type="InterPro" id="IPR011009">
    <property type="entry name" value="Kinase-like_dom_sf"/>
</dbReference>
<dbReference type="InterPro" id="IPR001611">
    <property type="entry name" value="Leu-rich_rpt"/>
</dbReference>
<dbReference type="InterPro" id="IPR003591">
    <property type="entry name" value="Leu-rich_rpt_typical-subtyp"/>
</dbReference>
<dbReference type="InterPro" id="IPR032675">
    <property type="entry name" value="LRR_dom_sf"/>
</dbReference>
<dbReference type="InterPro" id="IPR013210">
    <property type="entry name" value="LRR_N_plant-typ"/>
</dbReference>
<dbReference type="InterPro" id="IPR050647">
    <property type="entry name" value="Plant_LRR-RLKs"/>
</dbReference>
<dbReference type="InterPro" id="IPR000719">
    <property type="entry name" value="Prot_kinase_dom"/>
</dbReference>
<dbReference type="InterPro" id="IPR017441">
    <property type="entry name" value="Protein_kinase_ATP_BS"/>
</dbReference>
<dbReference type="InterPro" id="IPR008271">
    <property type="entry name" value="Ser/Thr_kinase_AS"/>
</dbReference>
<dbReference type="PANTHER" id="PTHR48056">
    <property type="entry name" value="LRR RECEPTOR-LIKE SERINE/THREONINE-PROTEIN KINASE-RELATED"/>
    <property type="match status" value="1"/>
</dbReference>
<dbReference type="PANTHER" id="PTHR48056:SF18">
    <property type="entry name" value="NON-SPECIFIC SERINE_THREONINE PROTEIN KINASE"/>
    <property type="match status" value="1"/>
</dbReference>
<dbReference type="Pfam" id="PF00560">
    <property type="entry name" value="LRR_1"/>
    <property type="match status" value="3"/>
</dbReference>
<dbReference type="Pfam" id="PF13855">
    <property type="entry name" value="LRR_8"/>
    <property type="match status" value="3"/>
</dbReference>
<dbReference type="Pfam" id="PF08263">
    <property type="entry name" value="LRRNT_2"/>
    <property type="match status" value="1"/>
</dbReference>
<dbReference type="Pfam" id="PF00069">
    <property type="entry name" value="Pkinase"/>
    <property type="match status" value="1"/>
</dbReference>
<dbReference type="PRINTS" id="PR00019">
    <property type="entry name" value="LEURICHRPT"/>
</dbReference>
<dbReference type="SMART" id="SM00365">
    <property type="entry name" value="LRR_SD22"/>
    <property type="match status" value="6"/>
</dbReference>
<dbReference type="SMART" id="SM00369">
    <property type="entry name" value="LRR_TYP"/>
    <property type="match status" value="9"/>
</dbReference>
<dbReference type="SMART" id="SM00220">
    <property type="entry name" value="S_TKc"/>
    <property type="match status" value="1"/>
</dbReference>
<dbReference type="SUPFAM" id="SSF52058">
    <property type="entry name" value="L domain-like"/>
    <property type="match status" value="3"/>
</dbReference>
<dbReference type="SUPFAM" id="SSF56112">
    <property type="entry name" value="Protein kinase-like (PK-like)"/>
    <property type="match status" value="1"/>
</dbReference>
<dbReference type="PROSITE" id="PS51450">
    <property type="entry name" value="LRR"/>
    <property type="match status" value="14"/>
</dbReference>
<dbReference type="PROSITE" id="PS00107">
    <property type="entry name" value="PROTEIN_KINASE_ATP"/>
    <property type="match status" value="1"/>
</dbReference>
<dbReference type="PROSITE" id="PS50011">
    <property type="entry name" value="PROTEIN_KINASE_DOM"/>
    <property type="match status" value="1"/>
</dbReference>
<dbReference type="PROSITE" id="PS00108">
    <property type="entry name" value="PROTEIN_KINASE_ST"/>
    <property type="match status" value="1"/>
</dbReference>
<sequence length="1036" mass="114340">MVIILLLVFFVGSSVSQPCHPNDLSALRELAGALKNKSVTESWLNGSRCCEWDGVFCEGSDVSGRVTKLVLPEKGLEGVISKSLGELTELRVLDLSRNQLKGEVPAEISKLEQLQVLDLSHNLLSGSVLGVVSGLKLIQSLNISSNSLSGKLSDVGVFPGLVMLNVSNNLFEGEIHPELCSSSGGIQVLDLSMNRLVGNLDGLYNCSKSIQQLHIDSNRLTGQLPDYLYSIRELEQLSLSGNYLSGELSKNLSNLSGLKSLLISENRFSDVIPDVFGNLTQLEHLDVSSNKFSGRFPPSLSQCSKLRVLDLRNNSLSGSINLNFTGFTDLCVLDLASNHFSGPLPDSLGHCPKMKILSLAKNEFRGKIPDTFKNLQSLLFLSLSNNSFVDFSETMNVLQHCRNLSTLILSKNFIGEEIPNNVTGFDNLAILALGNCGLRGQIPSWLLNCKKLEVLDLSWNHFYGTIPHWIGKMESLFYIDFSNNTLTGAIPVAITELKNLIRLNGTASQMTDSSGIPLYVKRNKSSNGLPYNQVSRFPPSIYLNNNRLNGTILPEIGRLKELHMLDLSRNNFTGTIPDSISGLDNLEVLDLSYNHLYGSIPLSFQSLTFLSRFSVAYNRLTGAIPSGGQFYSFPHSSFEGNLGLCRAIDSPCDVLMSNMLNPKGSSRRNNNGGKFGRSSIVVLTISLAIGITLLLSVILLRISRKDVDDRINDVDEETISGVSKALGPSKIVLFHSCGCKDLSVEELLKSTNNFSQANIIGCGGFGLVYKANFPDGSKAAVKRLSGDCGQMEREFQAEVEALSRAEHKNLVSLQGYCKHGNDRLLIYSFMENGSLDYWLHERVDGNMTLIWDVRLKIAQGAARGLAYLHKVCEPNVIHRDVKSSNILLDEKFEAHLADFGLARLLRPYDTHVTTDLVGTLGYIPPEYSQSLIATCRGDVYSFGVVLLELVTGRRPVEVCKGKSCRDLVSRVFQMKAEKREAELIDTTIRENVNERTVLEMLEIACKCIDHEPRRRPLIEEVVTWLEDLPMESVQQQ</sequence>
<proteinExistence type="evidence at protein level"/>
<organism>
    <name type="scientific">Arabidopsis thaliana</name>
    <name type="common">Mouse-ear cress</name>
    <dbReference type="NCBI Taxonomy" id="3702"/>
    <lineage>
        <taxon>Eukaryota</taxon>
        <taxon>Viridiplantae</taxon>
        <taxon>Streptophyta</taxon>
        <taxon>Embryophyta</taxon>
        <taxon>Tracheophyta</taxon>
        <taxon>Spermatophyta</taxon>
        <taxon>Magnoliopsida</taxon>
        <taxon>eudicotyledons</taxon>
        <taxon>Gunneridae</taxon>
        <taxon>Pentapetalae</taxon>
        <taxon>rosids</taxon>
        <taxon>malvids</taxon>
        <taxon>Brassicales</taxon>
        <taxon>Brassicaceae</taxon>
        <taxon>Camelineae</taxon>
        <taxon>Arabidopsis</taxon>
    </lineage>
</organism>
<keyword id="KW-0067">ATP-binding</keyword>
<keyword id="KW-1003">Cell membrane</keyword>
<keyword id="KW-0325">Glycoprotein</keyword>
<keyword id="KW-0418">Kinase</keyword>
<keyword id="KW-0433">Leucine-rich repeat</keyword>
<keyword id="KW-0472">Membrane</keyword>
<keyword id="KW-0547">Nucleotide-binding</keyword>
<keyword id="KW-0597">Phosphoprotein</keyword>
<keyword id="KW-0675">Receptor</keyword>
<keyword id="KW-1185">Reference proteome</keyword>
<keyword id="KW-0677">Repeat</keyword>
<keyword id="KW-0723">Serine/threonine-protein kinase</keyword>
<keyword id="KW-0732">Signal</keyword>
<keyword id="KW-0808">Transferase</keyword>
<keyword id="KW-0812">Transmembrane</keyword>
<keyword id="KW-1133">Transmembrane helix</keyword>
<name>PSKR2_ARATH</name>
<reference key="1">
    <citation type="journal article" date="1997" name="DNA Res.">
        <title>Structural analysis of Arabidopsis thaliana chromosome 5. III. Sequence features of the regions of 1,191,918 bp covered by seventeen physically assigned P1 clones.</title>
        <authorList>
            <person name="Nakamura Y."/>
            <person name="Sato S."/>
            <person name="Kaneko T."/>
            <person name="Kotani H."/>
            <person name="Asamizu E."/>
            <person name="Miyajima N."/>
            <person name="Tabata S."/>
        </authorList>
    </citation>
    <scope>NUCLEOTIDE SEQUENCE [LARGE SCALE GENOMIC DNA]</scope>
    <source>
        <strain>cv. Columbia</strain>
    </source>
</reference>
<reference key="2">
    <citation type="journal article" date="2017" name="Plant J.">
        <title>Araport11: a complete reannotation of the Arabidopsis thaliana reference genome.</title>
        <authorList>
            <person name="Cheng C.Y."/>
            <person name="Krishnakumar V."/>
            <person name="Chan A.P."/>
            <person name="Thibaud-Nissen F."/>
            <person name="Schobel S."/>
            <person name="Town C.D."/>
        </authorList>
    </citation>
    <scope>GENOME REANNOTATION</scope>
    <source>
        <strain>cv. Columbia</strain>
    </source>
</reference>
<reference key="3">
    <citation type="journal article" date="2003" name="Science">
        <title>Empirical analysis of transcriptional activity in the Arabidopsis genome.</title>
        <authorList>
            <person name="Yamada K."/>
            <person name="Lim J."/>
            <person name="Dale J.M."/>
            <person name="Chen H."/>
            <person name="Shinn P."/>
            <person name="Palm C.J."/>
            <person name="Southwick A.M."/>
            <person name="Wu H.C."/>
            <person name="Kim C.J."/>
            <person name="Nguyen M."/>
            <person name="Pham P.K."/>
            <person name="Cheuk R.F."/>
            <person name="Karlin-Newmann G."/>
            <person name="Liu S.X."/>
            <person name="Lam B."/>
            <person name="Sakano H."/>
            <person name="Wu T."/>
            <person name="Yu G."/>
            <person name="Miranda M."/>
            <person name="Quach H.L."/>
            <person name="Tripp M."/>
            <person name="Chang C.H."/>
            <person name="Lee J.M."/>
            <person name="Toriumi M.J."/>
            <person name="Chan M.M."/>
            <person name="Tang C.C."/>
            <person name="Onodera C.S."/>
            <person name="Deng J.M."/>
            <person name="Akiyama K."/>
            <person name="Ansari Y."/>
            <person name="Arakawa T."/>
            <person name="Banh J."/>
            <person name="Banno F."/>
            <person name="Bowser L."/>
            <person name="Brooks S.Y."/>
            <person name="Carninci P."/>
            <person name="Chao Q."/>
            <person name="Choy N."/>
            <person name="Enju A."/>
            <person name="Goldsmith A.D."/>
            <person name="Gurjal M."/>
            <person name="Hansen N.F."/>
            <person name="Hayashizaki Y."/>
            <person name="Johnson-Hopson C."/>
            <person name="Hsuan V.W."/>
            <person name="Iida K."/>
            <person name="Karnes M."/>
            <person name="Khan S."/>
            <person name="Koesema E."/>
            <person name="Ishida J."/>
            <person name="Jiang P.X."/>
            <person name="Jones T."/>
            <person name="Kawai J."/>
            <person name="Kamiya A."/>
            <person name="Meyers C."/>
            <person name="Nakajima M."/>
            <person name="Narusaka M."/>
            <person name="Seki M."/>
            <person name="Sakurai T."/>
            <person name="Satou M."/>
            <person name="Tamse R."/>
            <person name="Vaysberg M."/>
            <person name="Wallender E.K."/>
            <person name="Wong C."/>
            <person name="Yamamura Y."/>
            <person name="Yuan S."/>
            <person name="Shinozaki K."/>
            <person name="Davis R.W."/>
            <person name="Theologis A."/>
            <person name="Ecker J.R."/>
        </authorList>
    </citation>
    <scope>NUCLEOTIDE SEQUENCE [LARGE SCALE MRNA]</scope>
    <source>
        <strain>cv. Columbia</strain>
    </source>
</reference>
<reference key="4">
    <citation type="journal article" date="2007" name="Proc. Natl. Acad. Sci. U.S.A.">
        <title>Tyrosine-sulfated glycopeptide involved in cellular proliferation and expansion in Arabidopsis.</title>
        <authorList>
            <person name="Amano Y."/>
            <person name="Tsubouchi H."/>
            <person name="Shinohara H."/>
            <person name="Ogawa M."/>
            <person name="Matsubayashi Y."/>
        </authorList>
    </citation>
    <scope>IDENTIFICATION</scope>
    <scope>FUNCTION</scope>
    <scope>DISRUPTION PHENOTYPE</scope>
    <source>
        <strain>cv. Columbia</strain>
    </source>
</reference>
<feature type="signal peptide" evidence="3">
    <location>
        <begin position="1"/>
        <end position="16"/>
    </location>
</feature>
<feature type="chain" id="PRO_0000365618" description="Phytosulfokine receptor 2">
    <location>
        <begin position="17"/>
        <end position="1036"/>
    </location>
</feature>
<feature type="transmembrane region" description="Helical" evidence="3">
    <location>
        <begin position="680"/>
        <end position="700"/>
    </location>
</feature>
<feature type="repeat" description="LRR 1">
    <location>
        <begin position="89"/>
        <end position="111"/>
    </location>
</feature>
<feature type="repeat" description="LRR 2">
    <location>
        <begin position="113"/>
        <end position="136"/>
    </location>
</feature>
<feature type="repeat" description="LRR 3">
    <location>
        <begin position="137"/>
        <end position="159"/>
    </location>
</feature>
<feature type="repeat" description="LRR 4">
    <location>
        <begin position="160"/>
        <end position="182"/>
    </location>
</feature>
<feature type="repeat" description="LRR 5">
    <location>
        <begin position="185"/>
        <end position="207"/>
    </location>
</feature>
<feature type="repeat" description="LRR 6">
    <location>
        <begin position="209"/>
        <end position="231"/>
    </location>
</feature>
<feature type="repeat" description="LRR 7">
    <location>
        <begin position="233"/>
        <end position="256"/>
    </location>
</feature>
<feature type="repeat" description="LRR 8">
    <location>
        <begin position="257"/>
        <end position="279"/>
    </location>
</feature>
<feature type="repeat" description="LRR 9">
    <location>
        <begin position="281"/>
        <end position="303"/>
    </location>
</feature>
<feature type="repeat" description="LRR 10">
    <location>
        <begin position="305"/>
        <end position="326"/>
    </location>
</feature>
<feature type="repeat" description="LRR 11">
    <location>
        <begin position="329"/>
        <end position="351"/>
    </location>
</feature>
<feature type="repeat" description="LRR 12">
    <location>
        <begin position="353"/>
        <end position="375"/>
    </location>
</feature>
<feature type="repeat" description="LRR 13">
    <location>
        <begin position="377"/>
        <end position="398"/>
    </location>
</feature>
<feature type="repeat" description="LRR 14">
    <location>
        <begin position="403"/>
        <end position="423"/>
    </location>
</feature>
<feature type="repeat" description="LRR 15">
    <location>
        <begin position="427"/>
        <end position="450"/>
    </location>
</feature>
<feature type="repeat" description="LRR 16">
    <location>
        <begin position="451"/>
        <end position="473"/>
    </location>
</feature>
<feature type="repeat" description="LRR 17">
    <location>
        <begin position="475"/>
        <end position="498"/>
    </location>
</feature>
<feature type="repeat" description="LRR 18">
    <location>
        <begin position="561"/>
        <end position="583"/>
    </location>
</feature>
<feature type="repeat" description="LRR 19">
    <location>
        <begin position="585"/>
        <end position="606"/>
    </location>
</feature>
<feature type="domain" description="Protein kinase" evidence="4">
    <location>
        <begin position="754"/>
        <end position="1025"/>
    </location>
</feature>
<feature type="repeat" description="LRR 20">
    <location>
        <begin position="995"/>
        <end position="1020"/>
    </location>
</feature>
<feature type="active site" description="Proton acceptor" evidence="4 5">
    <location>
        <position position="880"/>
    </location>
</feature>
<feature type="binding site" evidence="4">
    <location>
        <begin position="760"/>
        <end position="768"/>
    </location>
    <ligand>
        <name>ATP</name>
        <dbReference type="ChEBI" id="CHEBI:30616"/>
    </ligand>
</feature>
<feature type="binding site" evidence="4">
    <location>
        <position position="782"/>
    </location>
    <ligand>
        <name>ATP</name>
        <dbReference type="ChEBI" id="CHEBI:30616"/>
    </ligand>
</feature>
<feature type="modified residue" description="Phosphothreonine" evidence="2">
    <location>
        <position position="751"/>
    </location>
</feature>
<feature type="modified residue" description="Phosphotyrosine" evidence="2">
    <location>
        <position position="827"/>
    </location>
</feature>
<feature type="modified residue" description="Phosphotyrosine" evidence="1">
    <location>
        <position position="867"/>
    </location>
</feature>
<feature type="modified residue" description="Phosphotyrosine" evidence="1">
    <location>
        <position position="922"/>
    </location>
</feature>
<feature type="glycosylation site" description="N-linked (GlcNAc...) asparagine" evidence="3">
    <location>
        <position position="36"/>
    </location>
</feature>
<feature type="glycosylation site" description="N-linked (GlcNAc...) asparagine" evidence="3">
    <location>
        <position position="45"/>
    </location>
</feature>
<feature type="glycosylation site" description="N-linked (GlcNAc...) asparagine" evidence="3">
    <location>
        <position position="142"/>
    </location>
</feature>
<feature type="glycosylation site" description="N-linked (GlcNAc...) asparagine" evidence="3">
    <location>
        <position position="165"/>
    </location>
</feature>
<feature type="glycosylation site" description="N-linked (GlcNAc...) asparagine" evidence="3">
    <location>
        <position position="205"/>
    </location>
</feature>
<feature type="glycosylation site" description="N-linked (GlcNAc...) asparagine" evidence="3">
    <location>
        <position position="251"/>
    </location>
</feature>
<feature type="glycosylation site" description="N-linked (GlcNAc...) asparagine" evidence="3">
    <location>
        <position position="254"/>
    </location>
</feature>
<feature type="glycosylation site" description="N-linked (GlcNAc...) asparagine" evidence="3">
    <location>
        <position position="278"/>
    </location>
</feature>
<feature type="glycosylation site" description="N-linked (GlcNAc...) asparagine" evidence="3">
    <location>
        <position position="313"/>
    </location>
</feature>
<feature type="glycosylation site" description="N-linked (GlcNAc...) asparagine" evidence="3">
    <location>
        <position position="323"/>
    </location>
</feature>
<feature type="glycosylation site" description="N-linked (GlcNAc...) asparagine" evidence="3">
    <location>
        <position position="385"/>
    </location>
</feature>
<feature type="glycosylation site" description="N-linked (GlcNAc...) asparagine" evidence="3">
    <location>
        <position position="403"/>
    </location>
</feature>
<feature type="glycosylation site" description="N-linked (GlcNAc...) asparagine" evidence="3">
    <location>
        <position position="421"/>
    </location>
</feature>
<feature type="glycosylation site" description="N-linked (GlcNAc...) asparagine" evidence="3">
    <location>
        <position position="483"/>
    </location>
</feature>
<feature type="glycosylation site" description="N-linked (GlcNAc...) asparagine" evidence="3">
    <location>
        <position position="504"/>
    </location>
</feature>
<feature type="glycosylation site" description="N-linked (GlcNAc...) asparagine" evidence="3">
    <location>
        <position position="523"/>
    </location>
</feature>
<feature type="glycosylation site" description="N-linked (GlcNAc...) asparagine" evidence="3">
    <location>
        <position position="549"/>
    </location>
</feature>
<feature type="glycosylation site" description="N-linked (GlcNAc...) asparagine" evidence="3">
    <location>
        <position position="571"/>
    </location>
</feature>
<accession>Q9FN37</accession>
<protein>
    <recommendedName>
        <fullName>Phytosulfokine receptor 2</fullName>
        <shortName>AtPSKR2</shortName>
        <ecNumber>2.7.11.1</ecNumber>
    </recommendedName>
    <alternativeName>
        <fullName>Phytosulfokine LRR receptor kinase 2</fullName>
    </alternativeName>
</protein>
<comment type="function">
    <text evidence="6">Phytosulfokine receptor with a serine/threonine-protein kinase activity.</text>
</comment>
<comment type="catalytic activity">
    <reaction>
        <text>L-seryl-[protein] + ATP = O-phospho-L-seryl-[protein] + ADP + H(+)</text>
        <dbReference type="Rhea" id="RHEA:17989"/>
        <dbReference type="Rhea" id="RHEA-COMP:9863"/>
        <dbReference type="Rhea" id="RHEA-COMP:11604"/>
        <dbReference type="ChEBI" id="CHEBI:15378"/>
        <dbReference type="ChEBI" id="CHEBI:29999"/>
        <dbReference type="ChEBI" id="CHEBI:30616"/>
        <dbReference type="ChEBI" id="CHEBI:83421"/>
        <dbReference type="ChEBI" id="CHEBI:456216"/>
        <dbReference type="EC" id="2.7.11.1"/>
    </reaction>
</comment>
<comment type="catalytic activity">
    <reaction>
        <text>L-threonyl-[protein] + ATP = O-phospho-L-threonyl-[protein] + ADP + H(+)</text>
        <dbReference type="Rhea" id="RHEA:46608"/>
        <dbReference type="Rhea" id="RHEA-COMP:11060"/>
        <dbReference type="Rhea" id="RHEA-COMP:11605"/>
        <dbReference type="ChEBI" id="CHEBI:15378"/>
        <dbReference type="ChEBI" id="CHEBI:30013"/>
        <dbReference type="ChEBI" id="CHEBI:30616"/>
        <dbReference type="ChEBI" id="CHEBI:61977"/>
        <dbReference type="ChEBI" id="CHEBI:456216"/>
        <dbReference type="EC" id="2.7.11.1"/>
    </reaction>
</comment>
<comment type="interaction">
    <interactant intactId="EBI-16902047">
        <id>Q9FN37</id>
    </interactant>
    <interactant intactId="EBI-20651385">
        <id>Q9SH71</id>
        <label>At1g64210</label>
    </interactant>
    <organismsDiffer>false</organismsDiffer>
    <experiments>2</experiments>
</comment>
<comment type="interaction">
    <interactant intactId="EBI-16902047">
        <id>Q9FN37</id>
    </interactant>
    <interactant intactId="EBI-1238661">
        <id>Q9M9C5</id>
        <label>At1g68400</label>
    </interactant>
    <organismsDiffer>false</organismsDiffer>
    <experiments>3</experiments>
</comment>
<comment type="interaction">
    <interactant intactId="EBI-16902047">
        <id>Q9FN37</id>
    </interactant>
    <interactant intactId="EBI-16943030">
        <id>C0LGK4</id>
        <label>At2g16250</label>
    </interactant>
    <organismsDiffer>false</organismsDiffer>
    <experiments>2</experiments>
</comment>
<comment type="interaction">
    <interactant intactId="EBI-16902047">
        <id>Q9FN37</id>
    </interactant>
    <interactant intactId="EBI-1238677">
        <id>Q9M8T0</id>
        <label>At3g02880</label>
    </interactant>
    <organismsDiffer>false</organismsDiffer>
    <experiments>2</experiments>
</comment>
<comment type="interaction">
    <interactant intactId="EBI-16902047">
        <id>Q9FN37</id>
    </interactant>
    <interactant intactId="EBI-20657062">
        <id>Q9FL63</id>
        <label>At5g24100</label>
    </interactant>
    <organismsDiffer>false</organismsDiffer>
    <experiments>2</experiments>
</comment>
<comment type="interaction">
    <interactant intactId="EBI-16902047">
        <id>Q9FN37</id>
    </interactant>
    <interactant intactId="EBI-16964970">
        <id>C0LGU5</id>
        <label>At5g45780</label>
    </interactant>
    <organismsDiffer>false</organismsDiffer>
    <experiments>3</experiments>
</comment>
<comment type="interaction">
    <interactant intactId="EBI-16902047">
        <id>Q9FN37</id>
    </interactant>
    <interactant intactId="EBI-20653342">
        <id>A0A178UFM8</id>
        <label>At5g51560</label>
    </interactant>
    <organismsDiffer>false</organismsDiffer>
    <experiments>2</experiments>
</comment>
<comment type="interaction">
    <interactant intactId="EBI-16902047">
        <id>Q9FN37</id>
    </interactant>
    <interactant intactId="EBI-16934827">
        <id>Q8W4S5</id>
        <label>At5g63710</label>
    </interactant>
    <organismsDiffer>false</organismsDiffer>
    <experiments>2</experiments>
</comment>
<comment type="interaction">
    <interactant intactId="EBI-16902047">
        <id>Q9FN37</id>
    </interactant>
    <interactant intactId="EBI-16914444">
        <id>Q9LJY0</id>
        <label>PRK4</label>
    </interactant>
    <organismsDiffer>false</organismsDiffer>
    <experiments>2</experiments>
</comment>
<comment type="interaction">
    <interactant intactId="EBI-16902047">
        <id>Q9FN37</id>
    </interactant>
    <interactant intactId="EBI-20654777">
        <id>Q9C9E4</id>
        <label>PRK8</label>
    </interactant>
    <organismsDiffer>false</organismsDiffer>
    <experiments>3</experiments>
</comment>
<comment type="interaction">
    <interactant intactId="EBI-16902047">
        <id>Q9FN37</id>
    </interactant>
    <interactant intactId="EBI-1626936">
        <id>Q9LVI6</id>
        <label>RLK902</label>
    </interactant>
    <organismsDiffer>false</organismsDiffer>
    <experiments>2</experiments>
</comment>
<comment type="subcellular location">
    <subcellularLocation>
        <location evidence="7">Cell membrane</location>
        <topology evidence="7">Single-pass membrane protein</topology>
    </subcellularLocation>
</comment>
<comment type="disruption phenotype">
    <text evidence="6">No visible phenotype.</text>
</comment>
<comment type="similarity">
    <text evidence="4">Belongs to the protein kinase superfamily. Ser/Thr protein kinase family.</text>
</comment>
<gene>
    <name type="primary">PSKR2</name>
    <name type="ordered locus">At5g53890</name>
    <name type="ORF">K19P17.5</name>
</gene>